<name>LPXH_ECO8A</name>
<comment type="function">
    <text evidence="1">Hydrolyzes the pyrophosphate bond of UDP-2,3-diacylglucosamine to yield 2,3-diacylglucosamine 1-phosphate (lipid X) and UMP by catalyzing the attack of water at the alpha-P atom. Involved in the biosynthesis of lipid A, a phosphorylated glycolipid that anchors the lipopolysaccharide to the outer membrane of the cell.</text>
</comment>
<comment type="catalytic activity">
    <reaction evidence="1">
        <text>UDP-2-N,3-O-bis[(3R)-3-hydroxytetradecanoyl]-alpha-D-glucosamine + H2O = 2-N,3-O-bis[(3R)-3-hydroxytetradecanoyl]-alpha-D-glucosaminyl 1-phosphate + UMP + 2 H(+)</text>
        <dbReference type="Rhea" id="RHEA:25213"/>
        <dbReference type="ChEBI" id="CHEBI:15377"/>
        <dbReference type="ChEBI" id="CHEBI:15378"/>
        <dbReference type="ChEBI" id="CHEBI:57865"/>
        <dbReference type="ChEBI" id="CHEBI:57957"/>
        <dbReference type="ChEBI" id="CHEBI:78847"/>
        <dbReference type="EC" id="3.6.1.54"/>
    </reaction>
</comment>
<comment type="cofactor">
    <cofactor evidence="1">
        <name>Mn(2+)</name>
        <dbReference type="ChEBI" id="CHEBI:29035"/>
    </cofactor>
    <text evidence="1">Binds 2 Mn(2+) ions per subunit in a binuclear metal center.</text>
</comment>
<comment type="pathway">
    <text evidence="1">Glycolipid biosynthesis; lipid IV(A) biosynthesis; lipid IV(A) from (3R)-3-hydroxytetradecanoyl-[acyl-carrier-protein] and UDP-N-acetyl-alpha-D-glucosamine: step 4/6.</text>
</comment>
<comment type="subcellular location">
    <subcellularLocation>
        <location evidence="1">Cell inner membrane</location>
        <topology evidence="1">Peripheral membrane protein</topology>
        <orientation evidence="1">Cytoplasmic side</orientation>
    </subcellularLocation>
</comment>
<comment type="similarity">
    <text evidence="1">Belongs to the LpxH family.</text>
</comment>
<gene>
    <name evidence="1" type="primary">lpxH</name>
    <name type="ordered locus">ECIAI1_0526</name>
</gene>
<accession>B7M4M7</accession>
<reference key="1">
    <citation type="journal article" date="2009" name="PLoS Genet.">
        <title>Organised genome dynamics in the Escherichia coli species results in highly diverse adaptive paths.</title>
        <authorList>
            <person name="Touchon M."/>
            <person name="Hoede C."/>
            <person name="Tenaillon O."/>
            <person name="Barbe V."/>
            <person name="Baeriswyl S."/>
            <person name="Bidet P."/>
            <person name="Bingen E."/>
            <person name="Bonacorsi S."/>
            <person name="Bouchier C."/>
            <person name="Bouvet O."/>
            <person name="Calteau A."/>
            <person name="Chiapello H."/>
            <person name="Clermont O."/>
            <person name="Cruveiller S."/>
            <person name="Danchin A."/>
            <person name="Diard M."/>
            <person name="Dossat C."/>
            <person name="Karoui M.E."/>
            <person name="Frapy E."/>
            <person name="Garry L."/>
            <person name="Ghigo J.M."/>
            <person name="Gilles A.M."/>
            <person name="Johnson J."/>
            <person name="Le Bouguenec C."/>
            <person name="Lescat M."/>
            <person name="Mangenot S."/>
            <person name="Martinez-Jehanne V."/>
            <person name="Matic I."/>
            <person name="Nassif X."/>
            <person name="Oztas S."/>
            <person name="Petit M.A."/>
            <person name="Pichon C."/>
            <person name="Rouy Z."/>
            <person name="Ruf C.S."/>
            <person name="Schneider D."/>
            <person name="Tourret J."/>
            <person name="Vacherie B."/>
            <person name="Vallenet D."/>
            <person name="Medigue C."/>
            <person name="Rocha E.P.C."/>
            <person name="Denamur E."/>
        </authorList>
    </citation>
    <scope>NUCLEOTIDE SEQUENCE [LARGE SCALE GENOMIC DNA]</scope>
    <source>
        <strain>IAI1</strain>
    </source>
</reference>
<organism>
    <name type="scientific">Escherichia coli O8 (strain IAI1)</name>
    <dbReference type="NCBI Taxonomy" id="585034"/>
    <lineage>
        <taxon>Bacteria</taxon>
        <taxon>Pseudomonadati</taxon>
        <taxon>Pseudomonadota</taxon>
        <taxon>Gammaproteobacteria</taxon>
        <taxon>Enterobacterales</taxon>
        <taxon>Enterobacteriaceae</taxon>
        <taxon>Escherichia</taxon>
    </lineage>
</organism>
<dbReference type="EC" id="3.6.1.54" evidence="1"/>
<dbReference type="EMBL" id="CU928160">
    <property type="protein sequence ID" value="CAQ97398.1"/>
    <property type="molecule type" value="Genomic_DNA"/>
</dbReference>
<dbReference type="RefSeq" id="WP_000212252.1">
    <property type="nucleotide sequence ID" value="NC_011741.1"/>
</dbReference>
<dbReference type="SMR" id="B7M4M7"/>
<dbReference type="GeneID" id="75204390"/>
<dbReference type="KEGG" id="ecr:ECIAI1_0526"/>
<dbReference type="HOGENOM" id="CLU_074586_0_0_6"/>
<dbReference type="UniPathway" id="UPA00359">
    <property type="reaction ID" value="UER00480"/>
</dbReference>
<dbReference type="GO" id="GO:0005737">
    <property type="term" value="C:cytoplasm"/>
    <property type="evidence" value="ECO:0007669"/>
    <property type="project" value="InterPro"/>
</dbReference>
<dbReference type="GO" id="GO:0019897">
    <property type="term" value="C:extrinsic component of plasma membrane"/>
    <property type="evidence" value="ECO:0007669"/>
    <property type="project" value="UniProtKB-UniRule"/>
</dbReference>
<dbReference type="GO" id="GO:0030145">
    <property type="term" value="F:manganese ion binding"/>
    <property type="evidence" value="ECO:0007669"/>
    <property type="project" value="UniProtKB-UniRule"/>
</dbReference>
<dbReference type="GO" id="GO:0008758">
    <property type="term" value="F:UDP-2,3-diacylglucosamine hydrolase activity"/>
    <property type="evidence" value="ECO:0007669"/>
    <property type="project" value="UniProtKB-UniRule"/>
</dbReference>
<dbReference type="GO" id="GO:0009245">
    <property type="term" value="P:lipid A biosynthetic process"/>
    <property type="evidence" value="ECO:0007669"/>
    <property type="project" value="UniProtKB-UniRule"/>
</dbReference>
<dbReference type="CDD" id="cd07398">
    <property type="entry name" value="MPP_YbbF-LpxH"/>
    <property type="match status" value="1"/>
</dbReference>
<dbReference type="FunFam" id="3.60.21.10:FF:000012">
    <property type="entry name" value="UDP-2,3-diacylglucosamine hydrolase"/>
    <property type="match status" value="1"/>
</dbReference>
<dbReference type="Gene3D" id="3.60.21.10">
    <property type="match status" value="1"/>
</dbReference>
<dbReference type="HAMAP" id="MF_00575">
    <property type="entry name" value="LpxH"/>
    <property type="match status" value="1"/>
</dbReference>
<dbReference type="InterPro" id="IPR004843">
    <property type="entry name" value="Calcineurin-like_PHP_ApaH"/>
</dbReference>
<dbReference type="InterPro" id="IPR043461">
    <property type="entry name" value="LpxH-like"/>
</dbReference>
<dbReference type="InterPro" id="IPR029052">
    <property type="entry name" value="Metallo-depent_PP-like"/>
</dbReference>
<dbReference type="InterPro" id="IPR010138">
    <property type="entry name" value="UDP-diacylglucosamine_Hdrlase"/>
</dbReference>
<dbReference type="NCBIfam" id="TIGR01854">
    <property type="entry name" value="lipid_A_lpxH"/>
    <property type="match status" value="1"/>
</dbReference>
<dbReference type="NCBIfam" id="NF003743">
    <property type="entry name" value="PRK05340.1"/>
    <property type="match status" value="1"/>
</dbReference>
<dbReference type="PANTHER" id="PTHR34990:SF1">
    <property type="entry name" value="UDP-2,3-DIACYLGLUCOSAMINE HYDROLASE"/>
    <property type="match status" value="1"/>
</dbReference>
<dbReference type="PANTHER" id="PTHR34990">
    <property type="entry name" value="UDP-2,3-DIACYLGLUCOSAMINE HYDROLASE-RELATED"/>
    <property type="match status" value="1"/>
</dbReference>
<dbReference type="Pfam" id="PF00149">
    <property type="entry name" value="Metallophos"/>
    <property type="match status" value="1"/>
</dbReference>
<dbReference type="SUPFAM" id="SSF56300">
    <property type="entry name" value="Metallo-dependent phosphatases"/>
    <property type="match status" value="1"/>
</dbReference>
<sequence length="240" mass="26924">MATLFIADLHLCVEEPAITAGFLRFLAGEARKADALYILGDLFEAWIGDDDPNPLHRQMAAAIKAVSDSGVPCYFIHGNRDFLLGKRFARESGMTLLPEEKVLELYGRRVLIMHGDTLCTDDAGYQAFRAKVHKPWLQMLFLALPLFVRKRIAARMRANSKEANSSKSLAIMDVNQNAVVSAMEKHQVQWLIHGHTHRPAVHELIANQQPAFRVVLGAWHTEGSMVKVTADDVELIHFPF</sequence>
<evidence type="ECO:0000255" key="1">
    <source>
        <dbReference type="HAMAP-Rule" id="MF_00575"/>
    </source>
</evidence>
<keyword id="KW-0997">Cell inner membrane</keyword>
<keyword id="KW-1003">Cell membrane</keyword>
<keyword id="KW-0378">Hydrolase</keyword>
<keyword id="KW-0441">Lipid A biosynthesis</keyword>
<keyword id="KW-0444">Lipid biosynthesis</keyword>
<keyword id="KW-0443">Lipid metabolism</keyword>
<keyword id="KW-0464">Manganese</keyword>
<keyword id="KW-0472">Membrane</keyword>
<keyword id="KW-0479">Metal-binding</keyword>
<protein>
    <recommendedName>
        <fullName evidence="1">UDP-2,3-diacylglucosamine hydrolase</fullName>
        <ecNumber evidence="1">3.6.1.54</ecNumber>
    </recommendedName>
    <alternativeName>
        <fullName evidence="1">UDP-2,3-diacylglucosamine diphosphatase</fullName>
    </alternativeName>
</protein>
<proteinExistence type="inferred from homology"/>
<feature type="chain" id="PRO_1000129520" description="UDP-2,3-diacylglucosamine hydrolase">
    <location>
        <begin position="1"/>
        <end position="240"/>
    </location>
</feature>
<feature type="binding site" evidence="1">
    <location>
        <position position="8"/>
    </location>
    <ligand>
        <name>Mn(2+)</name>
        <dbReference type="ChEBI" id="CHEBI:29035"/>
        <label>1</label>
    </ligand>
</feature>
<feature type="binding site" evidence="1">
    <location>
        <position position="10"/>
    </location>
    <ligand>
        <name>Mn(2+)</name>
        <dbReference type="ChEBI" id="CHEBI:29035"/>
        <label>1</label>
    </ligand>
</feature>
<feature type="binding site" evidence="1">
    <location>
        <position position="41"/>
    </location>
    <ligand>
        <name>Mn(2+)</name>
        <dbReference type="ChEBI" id="CHEBI:29035"/>
        <label>1</label>
    </ligand>
</feature>
<feature type="binding site" evidence="1">
    <location>
        <position position="41"/>
    </location>
    <ligand>
        <name>Mn(2+)</name>
        <dbReference type="ChEBI" id="CHEBI:29035"/>
        <label>2</label>
    </ligand>
</feature>
<feature type="binding site" evidence="1">
    <location>
        <begin position="79"/>
        <end position="80"/>
    </location>
    <ligand>
        <name>substrate</name>
    </ligand>
</feature>
<feature type="binding site" evidence="1">
    <location>
        <position position="79"/>
    </location>
    <ligand>
        <name>Mn(2+)</name>
        <dbReference type="ChEBI" id="CHEBI:29035"/>
        <label>2</label>
    </ligand>
</feature>
<feature type="binding site" evidence="1">
    <location>
        <position position="114"/>
    </location>
    <ligand>
        <name>Mn(2+)</name>
        <dbReference type="ChEBI" id="CHEBI:29035"/>
        <label>2</label>
    </ligand>
</feature>
<feature type="binding site" evidence="1">
    <location>
        <position position="122"/>
    </location>
    <ligand>
        <name>substrate</name>
    </ligand>
</feature>
<feature type="binding site" evidence="1">
    <location>
        <position position="160"/>
    </location>
    <ligand>
        <name>substrate</name>
    </ligand>
</feature>
<feature type="binding site" evidence="1">
    <location>
        <position position="164"/>
    </location>
    <ligand>
        <name>substrate</name>
    </ligand>
</feature>
<feature type="binding site" evidence="1">
    <location>
        <position position="167"/>
    </location>
    <ligand>
        <name>substrate</name>
    </ligand>
</feature>
<feature type="binding site" evidence="1">
    <location>
        <position position="195"/>
    </location>
    <ligand>
        <name>Mn(2+)</name>
        <dbReference type="ChEBI" id="CHEBI:29035"/>
        <label>2</label>
    </ligand>
</feature>
<feature type="binding site" evidence="1">
    <location>
        <position position="195"/>
    </location>
    <ligand>
        <name>substrate</name>
    </ligand>
</feature>
<feature type="binding site" evidence="1">
    <location>
        <position position="197"/>
    </location>
    <ligand>
        <name>Mn(2+)</name>
        <dbReference type="ChEBI" id="CHEBI:29035"/>
        <label>1</label>
    </ligand>
</feature>